<comment type="function">
    <text evidence="1">The glycine cleavage system catalyzes the degradation of glycine. The H protein shuttles the methylamine group of glycine from the P protein to the T protein.</text>
</comment>
<comment type="cofactor">
    <cofactor evidence="1">
        <name>(R)-lipoate</name>
        <dbReference type="ChEBI" id="CHEBI:83088"/>
    </cofactor>
    <text evidence="1">Binds 1 lipoyl cofactor covalently.</text>
</comment>
<comment type="subunit">
    <text evidence="1">The glycine cleavage system is composed of four proteins: P, T, L and H.</text>
</comment>
<comment type="similarity">
    <text evidence="1">Belongs to the GcvH family.</text>
</comment>
<sequence>MSEIPAELYYTDEHEWVLRTGDDTLRVGITDYAQAALGDVVFVQLPDVGAELTSGESFGEVESTKSVSDLYAPVSAKVLAVNGNLEASPDLVNSDPYGEGWLVDLQLDADDMEAALGGLLDADGYRGVVTE</sequence>
<organism>
    <name type="scientific">Mycobacterium sp. (strain KMS)</name>
    <dbReference type="NCBI Taxonomy" id="189918"/>
    <lineage>
        <taxon>Bacteria</taxon>
        <taxon>Bacillati</taxon>
        <taxon>Actinomycetota</taxon>
        <taxon>Actinomycetes</taxon>
        <taxon>Mycobacteriales</taxon>
        <taxon>Mycobacteriaceae</taxon>
        <taxon>Mycobacterium</taxon>
    </lineage>
</organism>
<keyword id="KW-0450">Lipoyl</keyword>
<name>GCSH_MYCSK</name>
<feature type="chain" id="PRO_0000302395" description="Glycine cleavage system H protein">
    <location>
        <begin position="1"/>
        <end position="131"/>
    </location>
</feature>
<feature type="domain" description="Lipoyl-binding" evidence="2">
    <location>
        <begin position="24"/>
        <end position="106"/>
    </location>
</feature>
<feature type="modified residue" description="N6-lipoyllysine" evidence="1">
    <location>
        <position position="65"/>
    </location>
</feature>
<protein>
    <recommendedName>
        <fullName evidence="1">Glycine cleavage system H protein</fullName>
    </recommendedName>
</protein>
<gene>
    <name evidence="1" type="primary">gcvH</name>
    <name type="ordered locus">Mkms_2889</name>
</gene>
<evidence type="ECO:0000255" key="1">
    <source>
        <dbReference type="HAMAP-Rule" id="MF_00272"/>
    </source>
</evidence>
<evidence type="ECO:0000255" key="2">
    <source>
        <dbReference type="PROSITE-ProRule" id="PRU01066"/>
    </source>
</evidence>
<reference key="1">
    <citation type="submission" date="2006-12" db="EMBL/GenBank/DDBJ databases">
        <title>Complete sequence of chromosome of Mycobacterium sp. KMS.</title>
        <authorList>
            <consortium name="US DOE Joint Genome Institute"/>
            <person name="Copeland A."/>
            <person name="Lucas S."/>
            <person name="Lapidus A."/>
            <person name="Barry K."/>
            <person name="Detter J.C."/>
            <person name="Glavina del Rio T."/>
            <person name="Hammon N."/>
            <person name="Israni S."/>
            <person name="Dalin E."/>
            <person name="Tice H."/>
            <person name="Pitluck S."/>
            <person name="Kiss H."/>
            <person name="Brettin T."/>
            <person name="Bruce D."/>
            <person name="Han C."/>
            <person name="Tapia R."/>
            <person name="Gilna P."/>
            <person name="Schmutz J."/>
            <person name="Larimer F."/>
            <person name="Land M."/>
            <person name="Hauser L."/>
            <person name="Kyrpides N."/>
            <person name="Mikhailova N."/>
            <person name="Miller C.D."/>
            <person name="Richardson P."/>
        </authorList>
    </citation>
    <scope>NUCLEOTIDE SEQUENCE [LARGE SCALE GENOMIC DNA]</scope>
    <source>
        <strain>KMS</strain>
    </source>
</reference>
<proteinExistence type="inferred from homology"/>
<dbReference type="EMBL" id="CP000518">
    <property type="protein sequence ID" value="ABL92083.1"/>
    <property type="molecule type" value="Genomic_DNA"/>
</dbReference>
<dbReference type="SMR" id="A1UGX5"/>
<dbReference type="STRING" id="189918.Mkms_2889"/>
<dbReference type="KEGG" id="mkm:Mkms_2889"/>
<dbReference type="HOGENOM" id="CLU_097408_2_2_11"/>
<dbReference type="OrthoDB" id="9796712at2"/>
<dbReference type="GO" id="GO:0005829">
    <property type="term" value="C:cytosol"/>
    <property type="evidence" value="ECO:0007669"/>
    <property type="project" value="TreeGrafter"/>
</dbReference>
<dbReference type="GO" id="GO:0005960">
    <property type="term" value="C:glycine cleavage complex"/>
    <property type="evidence" value="ECO:0007669"/>
    <property type="project" value="InterPro"/>
</dbReference>
<dbReference type="GO" id="GO:0019464">
    <property type="term" value="P:glycine decarboxylation via glycine cleavage system"/>
    <property type="evidence" value="ECO:0007669"/>
    <property type="project" value="UniProtKB-UniRule"/>
</dbReference>
<dbReference type="CDD" id="cd06848">
    <property type="entry name" value="GCS_H"/>
    <property type="match status" value="1"/>
</dbReference>
<dbReference type="Gene3D" id="2.40.50.100">
    <property type="match status" value="1"/>
</dbReference>
<dbReference type="HAMAP" id="MF_00272">
    <property type="entry name" value="GcvH"/>
    <property type="match status" value="1"/>
</dbReference>
<dbReference type="InterPro" id="IPR000089">
    <property type="entry name" value="Biotin_lipoyl"/>
</dbReference>
<dbReference type="InterPro" id="IPR002930">
    <property type="entry name" value="GCV_H"/>
</dbReference>
<dbReference type="InterPro" id="IPR033753">
    <property type="entry name" value="GCV_H/Fam206"/>
</dbReference>
<dbReference type="InterPro" id="IPR017453">
    <property type="entry name" value="GCV_H_sub"/>
</dbReference>
<dbReference type="InterPro" id="IPR011053">
    <property type="entry name" value="Single_hybrid_motif"/>
</dbReference>
<dbReference type="NCBIfam" id="TIGR00527">
    <property type="entry name" value="gcvH"/>
    <property type="match status" value="1"/>
</dbReference>
<dbReference type="NCBIfam" id="NF002270">
    <property type="entry name" value="PRK01202.1"/>
    <property type="match status" value="1"/>
</dbReference>
<dbReference type="PANTHER" id="PTHR11715">
    <property type="entry name" value="GLYCINE CLEAVAGE SYSTEM H PROTEIN"/>
    <property type="match status" value="1"/>
</dbReference>
<dbReference type="PANTHER" id="PTHR11715:SF3">
    <property type="entry name" value="GLYCINE CLEAVAGE SYSTEM H PROTEIN-RELATED"/>
    <property type="match status" value="1"/>
</dbReference>
<dbReference type="Pfam" id="PF01597">
    <property type="entry name" value="GCV_H"/>
    <property type="match status" value="1"/>
</dbReference>
<dbReference type="SUPFAM" id="SSF51230">
    <property type="entry name" value="Single hybrid motif"/>
    <property type="match status" value="1"/>
</dbReference>
<dbReference type="PROSITE" id="PS50968">
    <property type="entry name" value="BIOTINYL_LIPOYL"/>
    <property type="match status" value="1"/>
</dbReference>
<accession>A1UGX5</accession>